<proteinExistence type="evidence at protein level"/>
<reference key="1">
    <citation type="journal article" date="2006" name="Nature">
        <title>DNA sequence and analysis of human chromosome 8.</title>
        <authorList>
            <person name="Nusbaum C."/>
            <person name="Mikkelsen T.S."/>
            <person name="Zody M.C."/>
            <person name="Asakawa S."/>
            <person name="Taudien S."/>
            <person name="Garber M."/>
            <person name="Kodira C.D."/>
            <person name="Schueler M.G."/>
            <person name="Shimizu A."/>
            <person name="Whittaker C.A."/>
            <person name="Chang J.L."/>
            <person name="Cuomo C.A."/>
            <person name="Dewar K."/>
            <person name="FitzGerald M.G."/>
            <person name="Yang X."/>
            <person name="Allen N.R."/>
            <person name="Anderson S."/>
            <person name="Asakawa T."/>
            <person name="Blechschmidt K."/>
            <person name="Bloom T."/>
            <person name="Borowsky M.L."/>
            <person name="Butler J."/>
            <person name="Cook A."/>
            <person name="Corum B."/>
            <person name="DeArellano K."/>
            <person name="DeCaprio D."/>
            <person name="Dooley K.T."/>
            <person name="Dorris L. III"/>
            <person name="Engels R."/>
            <person name="Gloeckner G."/>
            <person name="Hafez N."/>
            <person name="Hagopian D.S."/>
            <person name="Hall J.L."/>
            <person name="Ishikawa S.K."/>
            <person name="Jaffe D.B."/>
            <person name="Kamat A."/>
            <person name="Kudoh J."/>
            <person name="Lehmann R."/>
            <person name="Lokitsang T."/>
            <person name="Macdonald P."/>
            <person name="Major J.E."/>
            <person name="Matthews C.D."/>
            <person name="Mauceli E."/>
            <person name="Menzel U."/>
            <person name="Mihalev A.H."/>
            <person name="Minoshima S."/>
            <person name="Murayama Y."/>
            <person name="Naylor J.W."/>
            <person name="Nicol R."/>
            <person name="Nguyen C."/>
            <person name="O'Leary S.B."/>
            <person name="O'Neill K."/>
            <person name="Parker S.C.J."/>
            <person name="Polley A."/>
            <person name="Raymond C.K."/>
            <person name="Reichwald K."/>
            <person name="Rodriguez J."/>
            <person name="Sasaki T."/>
            <person name="Schilhabel M."/>
            <person name="Siddiqui R."/>
            <person name="Smith C.L."/>
            <person name="Sneddon T.P."/>
            <person name="Talamas J.A."/>
            <person name="Tenzin P."/>
            <person name="Topham K."/>
            <person name="Venkataraman V."/>
            <person name="Wen G."/>
            <person name="Yamazaki S."/>
            <person name="Young S.K."/>
            <person name="Zeng Q."/>
            <person name="Zimmer A.R."/>
            <person name="Rosenthal A."/>
            <person name="Birren B.W."/>
            <person name="Platzer M."/>
            <person name="Shimizu N."/>
            <person name="Lander E.S."/>
        </authorList>
    </citation>
    <scope>NUCLEOTIDE SEQUENCE [LARGE SCALE GENOMIC DNA]</scope>
</reference>
<reference key="2">
    <citation type="submission" date="2005-07" db="EMBL/GenBank/DDBJ databases">
        <authorList>
            <person name="Mural R.J."/>
            <person name="Istrail S."/>
            <person name="Sutton G.G."/>
            <person name="Florea L."/>
            <person name="Halpern A.L."/>
            <person name="Mobarry C.M."/>
            <person name="Lippert R."/>
            <person name="Walenz B."/>
            <person name="Shatkay H."/>
            <person name="Dew I."/>
            <person name="Miller J.R."/>
            <person name="Flanigan M.J."/>
            <person name="Edwards N.J."/>
            <person name="Bolanos R."/>
            <person name="Fasulo D."/>
            <person name="Halldorsson B.V."/>
            <person name="Hannenhalli S."/>
            <person name="Turner R."/>
            <person name="Yooseph S."/>
            <person name="Lu F."/>
            <person name="Nusskern D.R."/>
            <person name="Shue B.C."/>
            <person name="Zheng X.H."/>
            <person name="Zhong F."/>
            <person name="Delcher A.L."/>
            <person name="Huson D.H."/>
            <person name="Kravitz S.A."/>
            <person name="Mouchard L."/>
            <person name="Reinert K."/>
            <person name="Remington K.A."/>
            <person name="Clark A.G."/>
            <person name="Waterman M.S."/>
            <person name="Eichler E.E."/>
            <person name="Adams M.D."/>
            <person name="Hunkapiller M.W."/>
            <person name="Myers E.W."/>
            <person name="Venter J.C."/>
        </authorList>
    </citation>
    <scope>NUCLEOTIDE SEQUENCE [LARGE SCALE GENOMIC DNA]</scope>
</reference>
<reference key="3">
    <citation type="journal article" date="2004" name="Genome Res.">
        <title>The status, quality, and expansion of the NIH full-length cDNA project: the Mammalian Gene Collection (MGC).</title>
        <authorList>
            <consortium name="The MGC Project Team"/>
        </authorList>
    </citation>
    <scope>NUCLEOTIDE SEQUENCE [LARGE SCALE MRNA] (ISOFORMS 1 AND 2)</scope>
    <source>
        <tissue>Blood</tissue>
    </source>
</reference>
<reference key="4">
    <citation type="journal article" date="2009" name="Science">
        <title>Lysine acetylation targets protein complexes and co-regulates major cellular functions.</title>
        <authorList>
            <person name="Choudhary C."/>
            <person name="Kumar C."/>
            <person name="Gnad F."/>
            <person name="Nielsen M.L."/>
            <person name="Rehman M."/>
            <person name="Walther T.C."/>
            <person name="Olsen J.V."/>
            <person name="Mann M."/>
        </authorList>
    </citation>
    <scope>ACETYLATION [LARGE SCALE ANALYSIS] AT LYS-21</scope>
    <scope>IDENTIFICATION BY MASS SPECTROMETRY [LARGE SCALE ANALYSIS]</scope>
</reference>
<reference key="5">
    <citation type="journal article" date="2011" name="BMC Syst. Biol.">
        <title>Initial characterization of the human central proteome.</title>
        <authorList>
            <person name="Burkard T.R."/>
            <person name="Planyavsky M."/>
            <person name="Kaupe I."/>
            <person name="Breitwieser F.P."/>
            <person name="Buerckstuemmer T."/>
            <person name="Bennett K.L."/>
            <person name="Superti-Furga G."/>
            <person name="Colinge J."/>
        </authorList>
    </citation>
    <scope>IDENTIFICATION BY MASS SPECTROMETRY [LARGE SCALE ANALYSIS]</scope>
</reference>
<reference key="6">
    <citation type="journal article" date="2013" name="J. Proteome Res.">
        <title>Toward a comprehensive characterization of a human cancer cell phosphoproteome.</title>
        <authorList>
            <person name="Zhou H."/>
            <person name="Di Palma S."/>
            <person name="Preisinger C."/>
            <person name="Peng M."/>
            <person name="Polat A.N."/>
            <person name="Heck A.J."/>
            <person name="Mohammed S."/>
        </authorList>
    </citation>
    <scope>PHOSPHORYLATION [LARGE SCALE ANALYSIS] AT SER-19 AND SER-69</scope>
    <scope>IDENTIFICATION BY MASS SPECTROMETRY [LARGE SCALE ANALYSIS]</scope>
    <source>
        <tissue>Cervix carcinoma</tissue>
        <tissue>Erythroleukemia</tissue>
    </source>
</reference>
<reference key="7">
    <citation type="journal article" date="2015" name="Cell Rep.">
        <title>Genome-wide RNAi Screening Identifies Protein Modules Required for 40S Subunit Synthesis in Human Cells.</title>
        <authorList>
            <person name="Badertscher L."/>
            <person name="Wild T."/>
            <person name="Montellese C."/>
            <person name="Alexander L.T."/>
            <person name="Bammert L."/>
            <person name="Sarazova M."/>
            <person name="Stebler M."/>
            <person name="Csucs G."/>
            <person name="Mayer T.U."/>
            <person name="Zamboni N."/>
            <person name="Zemp I."/>
            <person name="Horvath P."/>
            <person name="Kutay U."/>
        </authorList>
    </citation>
    <scope>FUNCTION</scope>
    <scope>SUBCELLULAR LOCATION</scope>
    <scope>SUBUNIT</scope>
</reference>
<feature type="chain" id="PRO_0000324604" description="Ribosomal biogenesis factor">
    <location>
        <begin position="1"/>
        <end position="100"/>
    </location>
</feature>
<feature type="modified residue" description="Phosphoserine" evidence="6">
    <location>
        <position position="19"/>
    </location>
</feature>
<feature type="modified residue" description="N6-acetyllysine" evidence="5">
    <location>
        <position position="21"/>
    </location>
</feature>
<feature type="modified residue" description="Phosphoserine" evidence="6">
    <location>
        <position position="69"/>
    </location>
</feature>
<feature type="splice variant" id="VSP_032304" description="In isoform 2." evidence="2">
    <original>INIMNEEKVNRVNKAFVNVQKELAHFAKSISLEPLQKELIPQQRHESKPVNVDEATRLMALL</original>
    <variation>VLHFS</variation>
    <location>
        <begin position="39"/>
        <end position="100"/>
    </location>
</feature>
<feature type="sequence conflict" description="In Ref. 3; BC062221." evidence="3" ref="3">
    <original>Q</original>
    <variation>L</variation>
    <location>
        <position position="74"/>
    </location>
</feature>
<sequence>MAKNKLRGPKSRNVFHIASQKNFKAKNKAKPVTTNLKKINIMNEEKVNRVNKAFVNVQKELAHFAKSISLEPLQKELIPQQRHESKPVNVDEATRLMALL</sequence>
<organism>
    <name type="scientific">Homo sapiens</name>
    <name type="common">Human</name>
    <dbReference type="NCBI Taxonomy" id="9606"/>
    <lineage>
        <taxon>Eukaryota</taxon>
        <taxon>Metazoa</taxon>
        <taxon>Chordata</taxon>
        <taxon>Craniata</taxon>
        <taxon>Vertebrata</taxon>
        <taxon>Euteleostomi</taxon>
        <taxon>Mammalia</taxon>
        <taxon>Eutheria</taxon>
        <taxon>Euarchontoglires</taxon>
        <taxon>Primates</taxon>
        <taxon>Haplorrhini</taxon>
        <taxon>Catarrhini</taxon>
        <taxon>Hominidae</taxon>
        <taxon>Homo</taxon>
    </lineage>
</organism>
<name>RBIS_HUMAN</name>
<comment type="function">
    <text evidence="1">Trans-acting factor in ribosome biogenesis required for efficient 40S and 60S subunit production.</text>
</comment>
<comment type="subunit">
    <text evidence="1">Associates with the pre-60S ribosomal particles.</text>
</comment>
<comment type="interaction">
    <interactant intactId="EBI-13380894">
        <id>Q8N0T1-2</id>
    </interactant>
    <interactant intactId="EBI-12001340">
        <id>P62508-3</id>
        <label>ESRRG</label>
    </interactant>
    <organismsDiffer>false</organismsDiffer>
    <experiments>3</experiments>
</comment>
<comment type="subcellular location">
    <subcellularLocation>
        <location evidence="1">Nucleus</location>
        <location evidence="1">Nucleolus</location>
    </subcellularLocation>
</comment>
<comment type="alternative products">
    <event type="alternative splicing"/>
    <isoform>
        <id>Q8N0T1-1</id>
        <name>1</name>
        <sequence type="displayed"/>
    </isoform>
    <isoform>
        <id>Q8N0T1-2</id>
        <name>2</name>
        <sequence type="described" ref="VSP_032304"/>
    </isoform>
</comment>
<protein>
    <recommendedName>
        <fullName evidence="3">Ribosomal biogenesis factor</fullName>
    </recommendedName>
</protein>
<keyword id="KW-0007">Acetylation</keyword>
<keyword id="KW-0025">Alternative splicing</keyword>
<keyword id="KW-0539">Nucleus</keyword>
<keyword id="KW-0597">Phosphoprotein</keyword>
<keyword id="KW-1267">Proteomics identification</keyword>
<keyword id="KW-1185">Reference proteome</keyword>
<evidence type="ECO:0000269" key="1">
    <source>
    </source>
</evidence>
<evidence type="ECO:0000303" key="2">
    <source>
    </source>
</evidence>
<evidence type="ECO:0000305" key="3"/>
<evidence type="ECO:0000312" key="4">
    <source>
        <dbReference type="HGNC" id="HGNC:32235"/>
    </source>
</evidence>
<evidence type="ECO:0007744" key="5">
    <source>
    </source>
</evidence>
<evidence type="ECO:0007744" key="6">
    <source>
    </source>
</evidence>
<accession>Q8N0T1</accession>
<accession>B2RXE7</accession>
<accession>E5RFW5</accession>
<dbReference type="EMBL" id="AC011773">
    <property type="status" value="NOT_ANNOTATED_CDS"/>
    <property type="molecule type" value="Genomic_DNA"/>
</dbReference>
<dbReference type="EMBL" id="CH471068">
    <property type="protein sequence ID" value="EAW87124.1"/>
    <property type="molecule type" value="Genomic_DNA"/>
</dbReference>
<dbReference type="EMBL" id="BC032347">
    <property type="protein sequence ID" value="AAH32347.1"/>
    <property type="molecule type" value="mRNA"/>
</dbReference>
<dbReference type="EMBL" id="BC146983">
    <property type="protein sequence ID" value="AAI46984.1"/>
    <property type="molecule type" value="mRNA"/>
</dbReference>
<dbReference type="EMBL" id="BC146988">
    <property type="protein sequence ID" value="AAI46989.1"/>
    <property type="molecule type" value="mRNA"/>
</dbReference>
<dbReference type="EMBL" id="BC157825">
    <property type="protein sequence ID" value="AAI57826.1"/>
    <property type="molecule type" value="mRNA"/>
</dbReference>
<dbReference type="EMBL" id="BC062221">
    <property type="status" value="NOT_ANNOTATED_CDS"/>
    <property type="molecule type" value="mRNA"/>
</dbReference>
<dbReference type="CCDS" id="CCDS55255.1">
    <molecule id="Q8N0T1-1"/>
</dbReference>
<dbReference type="RefSeq" id="NP_001093140.1">
    <molecule id="Q8N0T1-1"/>
    <property type="nucleotide sequence ID" value="NM_001099670.3"/>
</dbReference>
<dbReference type="RefSeq" id="NP_001093141.1">
    <molecule id="Q8N0T1-1"/>
    <property type="nucleotide sequence ID" value="NM_001099671.3"/>
</dbReference>
<dbReference type="RefSeq" id="NP_001093142.1">
    <molecule id="Q8N0T1-1"/>
    <property type="nucleotide sequence ID" value="NM_001099672.3"/>
</dbReference>
<dbReference type="RefSeq" id="NP_001093143.1">
    <molecule id="Q8N0T1-1"/>
    <property type="nucleotide sequence ID" value="NM_001099673.3"/>
</dbReference>
<dbReference type="RefSeq" id="XP_011515830.1">
    <molecule id="Q8N0T1-1"/>
    <property type="nucleotide sequence ID" value="XM_011517528.4"/>
</dbReference>
<dbReference type="RefSeq" id="XP_054216445.1">
    <molecule id="Q8N0T1-1"/>
    <property type="nucleotide sequence ID" value="XM_054360470.1"/>
</dbReference>
<dbReference type="SMR" id="Q8N0T1"/>
<dbReference type="BioGRID" id="135095">
    <property type="interactions" value="24"/>
</dbReference>
<dbReference type="FunCoup" id="Q8N0T1">
    <property type="interactions" value="2344"/>
</dbReference>
<dbReference type="IntAct" id="Q8N0T1">
    <property type="interactions" value="7"/>
</dbReference>
<dbReference type="MINT" id="Q8N0T1"/>
<dbReference type="STRING" id="9606.ENSP00000484492"/>
<dbReference type="GlyGen" id="Q8N0T1">
    <property type="glycosylation" value="1 site, 1 O-linked glycan (1 site)"/>
</dbReference>
<dbReference type="iPTMnet" id="Q8N0T1"/>
<dbReference type="PhosphoSitePlus" id="Q8N0T1"/>
<dbReference type="BioMuta" id="C8orf59"/>
<dbReference type="DMDM" id="519668681"/>
<dbReference type="jPOST" id="Q8N0T1"/>
<dbReference type="MassIVE" id="Q8N0T1"/>
<dbReference type="PaxDb" id="9606-ENSP00000484492"/>
<dbReference type="PeptideAtlas" id="Q8N0T1"/>
<dbReference type="ProteomicsDB" id="15478"/>
<dbReference type="ProteomicsDB" id="71453">
    <molecule id="Q8N0T1-1"/>
</dbReference>
<dbReference type="ProteomicsDB" id="71454">
    <molecule id="Q8N0T1-2"/>
</dbReference>
<dbReference type="Pumba" id="Q8N0T1"/>
<dbReference type="TopDownProteomics" id="Q8N0T1-1">
    <molecule id="Q8N0T1-1"/>
</dbReference>
<dbReference type="Antibodypedia" id="59064">
    <property type="antibodies" value="30 antibodies from 8 providers"/>
</dbReference>
<dbReference type="DNASU" id="401466"/>
<dbReference type="Ensembl" id="ENST00000321777.5">
    <molecule id="Q8N0T1-2"/>
    <property type="protein sequence ID" value="ENSP00000319020.5"/>
    <property type="gene ID" value="ENSG00000176731.12"/>
</dbReference>
<dbReference type="Ensembl" id="ENST00000611854.4">
    <molecule id="Q8N0T1-1"/>
    <property type="protein sequence ID" value="ENSP00000484811.1"/>
    <property type="gene ID" value="ENSG00000176731.12"/>
</dbReference>
<dbReference type="Ensembl" id="ENST00000612809.4">
    <molecule id="Q8N0T1-1"/>
    <property type="protein sequence ID" value="ENSP00000481745.1"/>
    <property type="gene ID" value="ENSG00000176731.12"/>
</dbReference>
<dbReference type="Ensembl" id="ENST00000612977.4">
    <molecule id="Q8N0T1-1"/>
    <property type="protein sequence ID" value="ENSP00000484101.1"/>
    <property type="gene ID" value="ENSG00000176731.12"/>
</dbReference>
<dbReference type="Ensembl" id="ENST00000615697.4">
    <molecule id="Q8N0T1-1"/>
    <property type="protein sequence ID" value="ENSP00000482944.1"/>
    <property type="gene ID" value="ENSG00000176731.12"/>
</dbReference>
<dbReference type="Ensembl" id="ENST00000619594.5">
    <molecule id="Q8N0T1-1"/>
    <property type="protein sequence ID" value="ENSP00000484492.1"/>
    <property type="gene ID" value="ENSG00000176731.12"/>
</dbReference>
<dbReference type="GeneID" id="401466"/>
<dbReference type="KEGG" id="hsa:401466"/>
<dbReference type="MANE-Select" id="ENST00000619594.5">
    <property type="protein sequence ID" value="ENSP00000484492.1"/>
    <property type="RefSeq nucleotide sequence ID" value="NM_001099673.3"/>
    <property type="RefSeq protein sequence ID" value="NP_001093143.1"/>
</dbReference>
<dbReference type="UCSC" id="uc033bru.2">
    <molecule id="Q8N0T1-1"/>
    <property type="organism name" value="human"/>
</dbReference>
<dbReference type="AGR" id="HGNC:32235"/>
<dbReference type="CTD" id="401466"/>
<dbReference type="DisGeNET" id="401466"/>
<dbReference type="GeneCards" id="RBIS"/>
<dbReference type="HGNC" id="HGNC:32235">
    <property type="gene designation" value="RBIS"/>
</dbReference>
<dbReference type="HPA" id="ENSG00000176731">
    <property type="expression patterns" value="Low tissue specificity"/>
</dbReference>
<dbReference type="neXtProt" id="NX_Q8N0T1"/>
<dbReference type="OpenTargets" id="ENSG00000176731"/>
<dbReference type="PharmGKB" id="PA142672322"/>
<dbReference type="VEuPathDB" id="HostDB:ENSG00000176731"/>
<dbReference type="eggNOG" id="ENOG502S982">
    <property type="taxonomic scope" value="Eukaryota"/>
</dbReference>
<dbReference type="GeneTree" id="ENSGT00390000015564"/>
<dbReference type="HOGENOM" id="CLU_152931_0_0_1"/>
<dbReference type="InParanoid" id="Q8N0T1"/>
<dbReference type="OMA" id="FQVANRH"/>
<dbReference type="OrthoDB" id="9520891at2759"/>
<dbReference type="PAN-GO" id="Q8N0T1">
    <property type="GO annotations" value="2 GO annotations based on evolutionary models"/>
</dbReference>
<dbReference type="PhylomeDB" id="Q8N0T1"/>
<dbReference type="TreeFam" id="TF330773"/>
<dbReference type="PathwayCommons" id="Q8N0T1"/>
<dbReference type="SignaLink" id="Q8N0T1"/>
<dbReference type="BioGRID-ORCS" id="401466">
    <property type="hits" value="49 hits in 721 CRISPR screens"/>
</dbReference>
<dbReference type="CD-CODE" id="91857CE7">
    <property type="entry name" value="Nucleolus"/>
</dbReference>
<dbReference type="ChiTaRS" id="C8orf59">
    <property type="organism name" value="human"/>
</dbReference>
<dbReference type="GenomeRNAi" id="401466"/>
<dbReference type="Pharos" id="Q8N0T1">
    <property type="development level" value="Tdark"/>
</dbReference>
<dbReference type="PRO" id="PR:Q8N0T1"/>
<dbReference type="Proteomes" id="UP000005640">
    <property type="component" value="Chromosome 8"/>
</dbReference>
<dbReference type="RNAct" id="Q8N0T1">
    <property type="molecule type" value="protein"/>
</dbReference>
<dbReference type="Bgee" id="ENSG00000176731">
    <property type="expression patterns" value="Expressed in epithelial cell of pancreas and 187 other cell types or tissues"/>
</dbReference>
<dbReference type="ExpressionAtlas" id="Q8N0T1">
    <property type="expression patterns" value="baseline and differential"/>
</dbReference>
<dbReference type="GO" id="GO:0005829">
    <property type="term" value="C:cytosol"/>
    <property type="evidence" value="ECO:0000314"/>
    <property type="project" value="HPA"/>
</dbReference>
<dbReference type="GO" id="GO:0005730">
    <property type="term" value="C:nucleolus"/>
    <property type="evidence" value="ECO:0000314"/>
    <property type="project" value="HPA"/>
</dbReference>
<dbReference type="GO" id="GO:0005654">
    <property type="term" value="C:nucleoplasm"/>
    <property type="evidence" value="ECO:0000314"/>
    <property type="project" value="HPA"/>
</dbReference>
<dbReference type="GO" id="GO:0042254">
    <property type="term" value="P:ribosome biogenesis"/>
    <property type="evidence" value="ECO:0000315"/>
    <property type="project" value="UniProtKB"/>
</dbReference>
<dbReference type="InterPro" id="IPR031389">
    <property type="entry name" value="RBIS"/>
</dbReference>
<dbReference type="PANTHER" id="PTHR35544">
    <property type="entry name" value="RIBOSOMAL BIOGENESIS FACTOR"/>
    <property type="match status" value="1"/>
</dbReference>
<dbReference type="PANTHER" id="PTHR35544:SF4">
    <property type="entry name" value="RIBOSOMAL BIOGENESIS FACTOR"/>
    <property type="match status" value="1"/>
</dbReference>
<dbReference type="Pfam" id="PF15679">
    <property type="entry name" value="DUF4665"/>
    <property type="match status" value="1"/>
</dbReference>
<gene>
    <name evidence="4" type="primary">RBIS</name>
    <name type="synonym">C8orf59</name>
</gene>